<gene>
    <name evidence="1" type="primary">rpsG</name>
    <name type="ordered locus">Aave_0334</name>
</gene>
<protein>
    <recommendedName>
        <fullName evidence="1">Small ribosomal subunit protein uS7</fullName>
    </recommendedName>
    <alternativeName>
        <fullName evidence="2">30S ribosomal protein S7</fullName>
    </alternativeName>
</protein>
<name>RS7_PARC0</name>
<organism>
    <name type="scientific">Paracidovorax citrulli (strain AAC00-1)</name>
    <name type="common">Acidovorax citrulli</name>
    <dbReference type="NCBI Taxonomy" id="397945"/>
    <lineage>
        <taxon>Bacteria</taxon>
        <taxon>Pseudomonadati</taxon>
        <taxon>Pseudomonadota</taxon>
        <taxon>Betaproteobacteria</taxon>
        <taxon>Burkholderiales</taxon>
        <taxon>Comamonadaceae</taxon>
        <taxon>Paracidovorax</taxon>
    </lineage>
</organism>
<feature type="chain" id="PRO_1000014132" description="Small ribosomal subunit protein uS7">
    <location>
        <begin position="1"/>
        <end position="157"/>
    </location>
</feature>
<comment type="function">
    <text evidence="1">One of the primary rRNA binding proteins, it binds directly to 16S rRNA where it nucleates assembly of the head domain of the 30S subunit. Is located at the subunit interface close to the decoding center, probably blocks exit of the E-site tRNA.</text>
</comment>
<comment type="subunit">
    <text evidence="1">Part of the 30S ribosomal subunit. Contacts proteins S9 and S11.</text>
</comment>
<comment type="similarity">
    <text evidence="1">Belongs to the universal ribosomal protein uS7 family.</text>
</comment>
<keyword id="KW-0687">Ribonucleoprotein</keyword>
<keyword id="KW-0689">Ribosomal protein</keyword>
<keyword id="KW-0694">RNA-binding</keyword>
<keyword id="KW-0699">rRNA-binding</keyword>
<keyword id="KW-0820">tRNA-binding</keyword>
<dbReference type="EMBL" id="CP000512">
    <property type="protein sequence ID" value="ABM30941.1"/>
    <property type="molecule type" value="Genomic_DNA"/>
</dbReference>
<dbReference type="RefSeq" id="WP_011793519.1">
    <property type="nucleotide sequence ID" value="NC_008752.1"/>
</dbReference>
<dbReference type="SMR" id="A1TJ03"/>
<dbReference type="STRING" id="397945.Aave_0334"/>
<dbReference type="GeneID" id="79790139"/>
<dbReference type="KEGG" id="aav:Aave_0334"/>
<dbReference type="eggNOG" id="COG0049">
    <property type="taxonomic scope" value="Bacteria"/>
</dbReference>
<dbReference type="HOGENOM" id="CLU_072226_1_1_4"/>
<dbReference type="OrthoDB" id="9807653at2"/>
<dbReference type="Proteomes" id="UP000002596">
    <property type="component" value="Chromosome"/>
</dbReference>
<dbReference type="GO" id="GO:0015935">
    <property type="term" value="C:small ribosomal subunit"/>
    <property type="evidence" value="ECO:0007669"/>
    <property type="project" value="InterPro"/>
</dbReference>
<dbReference type="GO" id="GO:0019843">
    <property type="term" value="F:rRNA binding"/>
    <property type="evidence" value="ECO:0007669"/>
    <property type="project" value="UniProtKB-UniRule"/>
</dbReference>
<dbReference type="GO" id="GO:0003735">
    <property type="term" value="F:structural constituent of ribosome"/>
    <property type="evidence" value="ECO:0007669"/>
    <property type="project" value="InterPro"/>
</dbReference>
<dbReference type="GO" id="GO:0000049">
    <property type="term" value="F:tRNA binding"/>
    <property type="evidence" value="ECO:0007669"/>
    <property type="project" value="UniProtKB-UniRule"/>
</dbReference>
<dbReference type="GO" id="GO:0006412">
    <property type="term" value="P:translation"/>
    <property type="evidence" value="ECO:0007669"/>
    <property type="project" value="UniProtKB-UniRule"/>
</dbReference>
<dbReference type="CDD" id="cd14869">
    <property type="entry name" value="uS7_Bacteria"/>
    <property type="match status" value="1"/>
</dbReference>
<dbReference type="FunFam" id="1.10.455.10:FF:000001">
    <property type="entry name" value="30S ribosomal protein S7"/>
    <property type="match status" value="1"/>
</dbReference>
<dbReference type="Gene3D" id="1.10.455.10">
    <property type="entry name" value="Ribosomal protein S7 domain"/>
    <property type="match status" value="1"/>
</dbReference>
<dbReference type="HAMAP" id="MF_00480_B">
    <property type="entry name" value="Ribosomal_uS7_B"/>
    <property type="match status" value="1"/>
</dbReference>
<dbReference type="InterPro" id="IPR000235">
    <property type="entry name" value="Ribosomal_uS7"/>
</dbReference>
<dbReference type="InterPro" id="IPR005717">
    <property type="entry name" value="Ribosomal_uS7_bac/org-type"/>
</dbReference>
<dbReference type="InterPro" id="IPR020606">
    <property type="entry name" value="Ribosomal_uS7_CS"/>
</dbReference>
<dbReference type="InterPro" id="IPR023798">
    <property type="entry name" value="Ribosomal_uS7_dom"/>
</dbReference>
<dbReference type="InterPro" id="IPR036823">
    <property type="entry name" value="Ribosomal_uS7_dom_sf"/>
</dbReference>
<dbReference type="NCBIfam" id="TIGR01029">
    <property type="entry name" value="rpsG_bact"/>
    <property type="match status" value="1"/>
</dbReference>
<dbReference type="PANTHER" id="PTHR11205">
    <property type="entry name" value="RIBOSOMAL PROTEIN S7"/>
    <property type="match status" value="1"/>
</dbReference>
<dbReference type="Pfam" id="PF00177">
    <property type="entry name" value="Ribosomal_S7"/>
    <property type="match status" value="1"/>
</dbReference>
<dbReference type="PIRSF" id="PIRSF002122">
    <property type="entry name" value="RPS7p_RPS7a_RPS5e_RPS7o"/>
    <property type="match status" value="1"/>
</dbReference>
<dbReference type="SUPFAM" id="SSF47973">
    <property type="entry name" value="Ribosomal protein S7"/>
    <property type="match status" value="1"/>
</dbReference>
<dbReference type="PROSITE" id="PS00052">
    <property type="entry name" value="RIBOSOMAL_S7"/>
    <property type="match status" value="1"/>
</dbReference>
<evidence type="ECO:0000255" key="1">
    <source>
        <dbReference type="HAMAP-Rule" id="MF_00480"/>
    </source>
</evidence>
<evidence type="ECO:0000305" key="2"/>
<proteinExistence type="inferred from homology"/>
<accession>A1TJ03</accession>
<reference key="1">
    <citation type="submission" date="2006-12" db="EMBL/GenBank/DDBJ databases">
        <title>Complete sequence of Acidovorax avenae subsp. citrulli AAC00-1.</title>
        <authorList>
            <person name="Copeland A."/>
            <person name="Lucas S."/>
            <person name="Lapidus A."/>
            <person name="Barry K."/>
            <person name="Detter J.C."/>
            <person name="Glavina del Rio T."/>
            <person name="Dalin E."/>
            <person name="Tice H."/>
            <person name="Pitluck S."/>
            <person name="Kiss H."/>
            <person name="Brettin T."/>
            <person name="Bruce D."/>
            <person name="Han C."/>
            <person name="Tapia R."/>
            <person name="Gilna P."/>
            <person name="Schmutz J."/>
            <person name="Larimer F."/>
            <person name="Land M."/>
            <person name="Hauser L."/>
            <person name="Kyrpides N."/>
            <person name="Kim E."/>
            <person name="Stahl D."/>
            <person name="Richardson P."/>
        </authorList>
    </citation>
    <scope>NUCLEOTIDE SEQUENCE [LARGE SCALE GENOMIC DNA]</scope>
    <source>
        <strain>AAC00-1</strain>
    </source>
</reference>
<sequence length="157" mass="18005">MPRRREVPKREILPDPKFGNVELSKFMNVIMEGGKKAVAERIIYGALELIQKKHPDKDPLEAFTVAINNVKPMVEVKSRRVGGANYQVPVEVRPVRRLALSMRWLKEAARKRGEKSMAQRLANELLEATEGRGGAMKRRDEVHRMAEANKAFSHFRF</sequence>